<accession>Q4R566</accession>
<protein>
    <recommendedName>
        <fullName>FXYD domain-containing ion transport regulator 6</fullName>
    </recommendedName>
    <alternativeName>
        <fullName>Phosphohippolin</fullName>
    </alternativeName>
</protein>
<gene>
    <name type="primary">FXYD6</name>
    <name type="ORF">QccE-17168</name>
</gene>
<feature type="signal peptide" evidence="1">
    <location>
        <begin position="1"/>
        <end position="18"/>
    </location>
</feature>
<feature type="chain" id="PRO_0000010373" description="FXYD domain-containing ion transport regulator 6">
    <location>
        <begin position="19"/>
        <end position="95"/>
    </location>
</feature>
<feature type="topological domain" description="Extracellular" evidence="3">
    <location>
        <begin position="19"/>
        <end position="35"/>
    </location>
</feature>
<feature type="transmembrane region" description="Helical" evidence="2">
    <location>
        <begin position="36"/>
        <end position="58"/>
    </location>
</feature>
<feature type="topological domain" description="Cytoplasmic" evidence="3">
    <location>
        <begin position="59"/>
        <end position="95"/>
    </location>
</feature>
<name>FXYD6_MACFA</name>
<proteinExistence type="inferred from homology"/>
<dbReference type="EMBL" id="AB169678">
    <property type="protein sequence ID" value="BAE01759.1"/>
    <property type="molecule type" value="mRNA"/>
</dbReference>
<dbReference type="RefSeq" id="NP_001272194.1">
    <property type="nucleotide sequence ID" value="NM_001285265.1"/>
</dbReference>
<dbReference type="SMR" id="Q4R566"/>
<dbReference type="STRING" id="9541.ENSMFAP00000006411"/>
<dbReference type="eggNOG" id="ENOG502S570">
    <property type="taxonomic scope" value="Eukaryota"/>
</dbReference>
<dbReference type="Proteomes" id="UP000233100">
    <property type="component" value="Unplaced"/>
</dbReference>
<dbReference type="GO" id="GO:0005886">
    <property type="term" value="C:plasma membrane"/>
    <property type="evidence" value="ECO:0007669"/>
    <property type="project" value="UniProtKB-SubCell"/>
</dbReference>
<dbReference type="GO" id="GO:0017080">
    <property type="term" value="F:sodium channel regulator activity"/>
    <property type="evidence" value="ECO:0007669"/>
    <property type="project" value="TreeGrafter"/>
</dbReference>
<dbReference type="GO" id="GO:0006813">
    <property type="term" value="P:potassium ion transport"/>
    <property type="evidence" value="ECO:0007669"/>
    <property type="project" value="UniProtKB-KW"/>
</dbReference>
<dbReference type="GO" id="GO:0043269">
    <property type="term" value="P:regulation of monoatomic ion transport"/>
    <property type="evidence" value="ECO:0007669"/>
    <property type="project" value="InterPro"/>
</dbReference>
<dbReference type="GO" id="GO:0006814">
    <property type="term" value="P:sodium ion transport"/>
    <property type="evidence" value="ECO:0007669"/>
    <property type="project" value="UniProtKB-KW"/>
</dbReference>
<dbReference type="FunFam" id="1.20.5.780:FF:000001">
    <property type="entry name" value="Fxyd domain-containing ion transport regulator"/>
    <property type="match status" value="1"/>
</dbReference>
<dbReference type="Gene3D" id="1.20.5.780">
    <property type="entry name" value="Single helix bin"/>
    <property type="match status" value="1"/>
</dbReference>
<dbReference type="InterPro" id="IPR047297">
    <property type="entry name" value="FXYD_motif"/>
</dbReference>
<dbReference type="InterPro" id="IPR000272">
    <property type="entry name" value="Ion-transport_regulator_FXYD"/>
</dbReference>
<dbReference type="PANTHER" id="PTHR14132:SF15">
    <property type="entry name" value="FXYD DOMAIN-CONTAINING ION TRANSPORT REGULATOR 6-RELATED"/>
    <property type="match status" value="1"/>
</dbReference>
<dbReference type="PANTHER" id="PTHR14132">
    <property type="entry name" value="SODIUM/POTASSIUM-TRANSPORTING ATPASE SUBUNIT GAMMA"/>
    <property type="match status" value="1"/>
</dbReference>
<dbReference type="Pfam" id="PF02038">
    <property type="entry name" value="ATP1G1_PLM_MAT8"/>
    <property type="match status" value="1"/>
</dbReference>
<dbReference type="PROSITE" id="PS01310">
    <property type="entry name" value="FXYD"/>
    <property type="match status" value="1"/>
</dbReference>
<keyword id="KW-1003">Cell membrane</keyword>
<keyword id="KW-0406">Ion transport</keyword>
<keyword id="KW-0472">Membrane</keyword>
<keyword id="KW-0630">Potassium</keyword>
<keyword id="KW-0633">Potassium transport</keyword>
<keyword id="KW-1185">Reference proteome</keyword>
<keyword id="KW-0732">Signal</keyword>
<keyword id="KW-0915">Sodium</keyword>
<keyword id="KW-0739">Sodium transport</keyword>
<keyword id="KW-0740">Sodium/potassium transport</keyword>
<keyword id="KW-0812">Transmembrane</keyword>
<keyword id="KW-1133">Transmembrane helix</keyword>
<keyword id="KW-0813">Transport</keyword>
<reference key="1">
    <citation type="submission" date="2005-06" db="EMBL/GenBank/DDBJ databases">
        <title>DNA sequences of macaque genes expressed in brain or testis and its evolutionary implications.</title>
        <authorList>
            <consortium name="International consortium for macaque cDNA sequencing and analysis"/>
        </authorList>
    </citation>
    <scope>NUCLEOTIDE SEQUENCE [LARGE SCALE MRNA]</scope>
    <source>
        <tissue>Brain cortex</tissue>
    </source>
</reference>
<organism>
    <name type="scientific">Macaca fascicularis</name>
    <name type="common">Crab-eating macaque</name>
    <name type="synonym">Cynomolgus monkey</name>
    <dbReference type="NCBI Taxonomy" id="9541"/>
    <lineage>
        <taxon>Eukaryota</taxon>
        <taxon>Metazoa</taxon>
        <taxon>Chordata</taxon>
        <taxon>Craniata</taxon>
        <taxon>Vertebrata</taxon>
        <taxon>Euteleostomi</taxon>
        <taxon>Mammalia</taxon>
        <taxon>Eutheria</taxon>
        <taxon>Euarchontoglires</taxon>
        <taxon>Primates</taxon>
        <taxon>Haplorrhini</taxon>
        <taxon>Catarrhini</taxon>
        <taxon>Cercopithecidae</taxon>
        <taxon>Cercopithecinae</taxon>
        <taxon>Macaca</taxon>
    </lineage>
</organism>
<evidence type="ECO:0000250" key="1">
    <source>
        <dbReference type="UniProtKB" id="Q91XV6"/>
    </source>
</evidence>
<evidence type="ECO:0000250" key="2">
    <source>
        <dbReference type="UniProtKB" id="Q9H0Q3"/>
    </source>
</evidence>
<evidence type="ECO:0000255" key="3"/>
<evidence type="ECO:0000305" key="4"/>
<sequence>MELVLVFLCSLLAPMVLASTAEKEKEMDPFHYDYQTLRIGGLVFAVVLFSVGILLILSRRCKCSFNQKPRAPGDEEAQVENLITANATEPQKAEN</sequence>
<comment type="function">
    <text evidence="1 2">Associates with and regulates the activity of the sodium/potassium-transporting ATPase (NKA) which catalyzes the hydrolysis of ATP coupled with the exchange of Na(+) and K(+) ions across the plasma membrane. Reduces the apparent affinity for intracellular Na(+) with no change in the apparent affinity for extracellular K(+) (By similarity). In addition to modulating NKA kinetics, may also function as a regulator of NKA localization to the plasma membrane (By similarity).</text>
</comment>
<comment type="subunit">
    <text evidence="2">Regulatory subunit of the sodium/potassium-transporting ATPase which is composed of a catalytic alpha subunit, a non-catalytic beta subunit and an additional regulatory subunit. The regulatory subunit, a member of the FXYD protein family, modulates the enzymatic activity in a tissue- and isoform-specific way by changing affinities of the Na+/K+-ATPase toward Na(+), K(+) or ATP.</text>
</comment>
<comment type="subcellular location">
    <subcellularLocation>
        <location evidence="1">Cell membrane</location>
        <topology evidence="4">Single-pass type I membrane protein</topology>
    </subcellularLocation>
</comment>
<comment type="similarity">
    <text evidence="4">Belongs to the FXYD family.</text>
</comment>